<organism>
    <name type="scientific">Pseudomonas savastanoi pv. phaseolicola (strain 1448A / Race 6)</name>
    <name type="common">Pseudomonas syringae pv. phaseolicola (strain 1448A / Race 6)</name>
    <dbReference type="NCBI Taxonomy" id="264730"/>
    <lineage>
        <taxon>Bacteria</taxon>
        <taxon>Pseudomonadati</taxon>
        <taxon>Pseudomonadota</taxon>
        <taxon>Gammaproteobacteria</taxon>
        <taxon>Pseudomonadales</taxon>
        <taxon>Pseudomonadaceae</taxon>
        <taxon>Pseudomonas</taxon>
    </lineage>
</organism>
<keyword id="KW-0067">ATP-binding</keyword>
<keyword id="KW-0963">Cytoplasm</keyword>
<keyword id="KW-0324">Glycolysis</keyword>
<keyword id="KW-0418">Kinase</keyword>
<keyword id="KW-0547">Nucleotide-binding</keyword>
<keyword id="KW-0808">Transferase</keyword>
<name>PGK_PSE14</name>
<sequence>MTVLKMTDLDLQGKRVLIREDLNVPVKDGVVSSDARILASLPTIRLALEKGAAVMVCSHLGRPTEGEFSAENSLKPVADYLSKALGRDVPLVADYLDGVDVKAGDVVLFENVRFNKGEKKNADELAQKYAALCDVFVMDAFGTAHRAEGSTHGVAKFAKVAAAGPLLAAELEALGKALGAPAQPMTAIVAGSKVSTKLDVLNSLSGICNQLIVGGGIANTFLAAAGHKVGKSLYEPDLLDTARAIAAKVSVPLPTDVVVAKEFAESATATVKLIADVADDDMILDIGPQTAAHFAELLKSSGTILWNGPVGVFEFDQFGEGTKTLAKAIGESQAFSIAGGGDTLAAIDKYGVAEQISYISTGGGAFLEFVEGKVLPAVEVLEQRAKA</sequence>
<reference key="1">
    <citation type="journal article" date="2005" name="J. Bacteriol.">
        <title>Whole-genome sequence analysis of Pseudomonas syringae pv. phaseolicola 1448A reveals divergence among pathovars in genes involved in virulence and transposition.</title>
        <authorList>
            <person name="Joardar V."/>
            <person name="Lindeberg M."/>
            <person name="Jackson R.W."/>
            <person name="Selengut J."/>
            <person name="Dodson R."/>
            <person name="Brinkac L.M."/>
            <person name="Daugherty S.C."/>
            <person name="DeBoy R.T."/>
            <person name="Durkin A.S."/>
            <person name="Gwinn Giglio M."/>
            <person name="Madupu R."/>
            <person name="Nelson W.C."/>
            <person name="Rosovitz M.J."/>
            <person name="Sullivan S.A."/>
            <person name="Crabtree J."/>
            <person name="Creasy T."/>
            <person name="Davidsen T.M."/>
            <person name="Haft D.H."/>
            <person name="Zafar N."/>
            <person name="Zhou L."/>
            <person name="Halpin R."/>
            <person name="Holley T."/>
            <person name="Khouri H.M."/>
            <person name="Feldblyum T.V."/>
            <person name="White O."/>
            <person name="Fraser C.M."/>
            <person name="Chatterjee A.K."/>
            <person name="Cartinhour S."/>
            <person name="Schneider D."/>
            <person name="Mansfield J.W."/>
            <person name="Collmer A."/>
            <person name="Buell R."/>
        </authorList>
    </citation>
    <scope>NUCLEOTIDE SEQUENCE [LARGE SCALE GENOMIC DNA]</scope>
    <source>
        <strain>1448A / Race 6</strain>
    </source>
</reference>
<proteinExistence type="inferred from homology"/>
<accession>Q48CH7</accession>
<dbReference type="EC" id="2.7.2.3" evidence="1"/>
<dbReference type="EMBL" id="CP000058">
    <property type="protein sequence ID" value="AAZ33983.1"/>
    <property type="molecule type" value="Genomic_DNA"/>
</dbReference>
<dbReference type="RefSeq" id="WP_011169752.1">
    <property type="nucleotide sequence ID" value="NC_005773.3"/>
</dbReference>
<dbReference type="SMR" id="Q48CH7"/>
<dbReference type="KEGG" id="psp:PSPPH_4819"/>
<dbReference type="eggNOG" id="COG0126">
    <property type="taxonomic scope" value="Bacteria"/>
</dbReference>
<dbReference type="HOGENOM" id="CLU_025427_0_2_6"/>
<dbReference type="UniPathway" id="UPA00109">
    <property type="reaction ID" value="UER00185"/>
</dbReference>
<dbReference type="Proteomes" id="UP000000551">
    <property type="component" value="Chromosome"/>
</dbReference>
<dbReference type="GO" id="GO:0005829">
    <property type="term" value="C:cytosol"/>
    <property type="evidence" value="ECO:0007669"/>
    <property type="project" value="TreeGrafter"/>
</dbReference>
<dbReference type="GO" id="GO:0043531">
    <property type="term" value="F:ADP binding"/>
    <property type="evidence" value="ECO:0007669"/>
    <property type="project" value="TreeGrafter"/>
</dbReference>
<dbReference type="GO" id="GO:0005524">
    <property type="term" value="F:ATP binding"/>
    <property type="evidence" value="ECO:0007669"/>
    <property type="project" value="UniProtKB-KW"/>
</dbReference>
<dbReference type="GO" id="GO:0004618">
    <property type="term" value="F:phosphoglycerate kinase activity"/>
    <property type="evidence" value="ECO:0007669"/>
    <property type="project" value="UniProtKB-UniRule"/>
</dbReference>
<dbReference type="GO" id="GO:0006094">
    <property type="term" value="P:gluconeogenesis"/>
    <property type="evidence" value="ECO:0007669"/>
    <property type="project" value="TreeGrafter"/>
</dbReference>
<dbReference type="GO" id="GO:0006096">
    <property type="term" value="P:glycolytic process"/>
    <property type="evidence" value="ECO:0007669"/>
    <property type="project" value="UniProtKB-UniRule"/>
</dbReference>
<dbReference type="FunFam" id="3.40.50.1260:FF:000001">
    <property type="entry name" value="Phosphoglycerate kinase"/>
    <property type="match status" value="1"/>
</dbReference>
<dbReference type="FunFam" id="3.40.50.1260:FF:000002">
    <property type="entry name" value="Phosphoglycerate kinase"/>
    <property type="match status" value="1"/>
</dbReference>
<dbReference type="Gene3D" id="3.40.50.1260">
    <property type="entry name" value="Phosphoglycerate kinase, N-terminal domain"/>
    <property type="match status" value="2"/>
</dbReference>
<dbReference type="HAMAP" id="MF_00145">
    <property type="entry name" value="Phosphoglyc_kinase"/>
    <property type="match status" value="1"/>
</dbReference>
<dbReference type="InterPro" id="IPR001576">
    <property type="entry name" value="Phosphoglycerate_kinase"/>
</dbReference>
<dbReference type="InterPro" id="IPR015911">
    <property type="entry name" value="Phosphoglycerate_kinase_CS"/>
</dbReference>
<dbReference type="InterPro" id="IPR015824">
    <property type="entry name" value="Phosphoglycerate_kinase_N"/>
</dbReference>
<dbReference type="InterPro" id="IPR036043">
    <property type="entry name" value="Phosphoglycerate_kinase_sf"/>
</dbReference>
<dbReference type="PANTHER" id="PTHR11406">
    <property type="entry name" value="PHOSPHOGLYCERATE KINASE"/>
    <property type="match status" value="1"/>
</dbReference>
<dbReference type="PANTHER" id="PTHR11406:SF23">
    <property type="entry name" value="PHOSPHOGLYCERATE KINASE 1, CHLOROPLASTIC-RELATED"/>
    <property type="match status" value="1"/>
</dbReference>
<dbReference type="Pfam" id="PF00162">
    <property type="entry name" value="PGK"/>
    <property type="match status" value="1"/>
</dbReference>
<dbReference type="PIRSF" id="PIRSF000724">
    <property type="entry name" value="Pgk"/>
    <property type="match status" value="1"/>
</dbReference>
<dbReference type="PRINTS" id="PR00477">
    <property type="entry name" value="PHGLYCKINASE"/>
</dbReference>
<dbReference type="SUPFAM" id="SSF53748">
    <property type="entry name" value="Phosphoglycerate kinase"/>
    <property type="match status" value="1"/>
</dbReference>
<dbReference type="PROSITE" id="PS00111">
    <property type="entry name" value="PGLYCERATE_KINASE"/>
    <property type="match status" value="1"/>
</dbReference>
<protein>
    <recommendedName>
        <fullName evidence="1">Phosphoglycerate kinase</fullName>
        <ecNumber evidence="1">2.7.2.3</ecNumber>
    </recommendedName>
</protein>
<gene>
    <name evidence="1" type="primary">pgk</name>
    <name type="ordered locus">PSPPH_4819</name>
</gene>
<feature type="chain" id="PRO_1000058033" description="Phosphoglycerate kinase">
    <location>
        <begin position="1"/>
        <end position="387"/>
    </location>
</feature>
<feature type="binding site" evidence="1">
    <location>
        <begin position="21"/>
        <end position="23"/>
    </location>
    <ligand>
        <name>substrate</name>
    </ligand>
</feature>
<feature type="binding site" evidence="1">
    <location>
        <position position="36"/>
    </location>
    <ligand>
        <name>substrate</name>
    </ligand>
</feature>
<feature type="binding site" evidence="1">
    <location>
        <begin position="59"/>
        <end position="62"/>
    </location>
    <ligand>
        <name>substrate</name>
    </ligand>
</feature>
<feature type="binding site" evidence="1">
    <location>
        <position position="113"/>
    </location>
    <ligand>
        <name>substrate</name>
    </ligand>
</feature>
<feature type="binding site" evidence="1">
    <location>
        <position position="146"/>
    </location>
    <ligand>
        <name>substrate</name>
    </ligand>
</feature>
<feature type="binding site" evidence="1">
    <location>
        <position position="197"/>
    </location>
    <ligand>
        <name>ATP</name>
        <dbReference type="ChEBI" id="CHEBI:30616"/>
    </ligand>
</feature>
<feature type="binding site" evidence="1">
    <location>
        <position position="314"/>
    </location>
    <ligand>
        <name>ATP</name>
        <dbReference type="ChEBI" id="CHEBI:30616"/>
    </ligand>
</feature>
<feature type="binding site" evidence="1">
    <location>
        <begin position="340"/>
        <end position="343"/>
    </location>
    <ligand>
        <name>ATP</name>
        <dbReference type="ChEBI" id="CHEBI:30616"/>
    </ligand>
</feature>
<evidence type="ECO:0000255" key="1">
    <source>
        <dbReference type="HAMAP-Rule" id="MF_00145"/>
    </source>
</evidence>
<comment type="catalytic activity">
    <reaction evidence="1">
        <text>(2R)-3-phosphoglycerate + ATP = (2R)-3-phospho-glyceroyl phosphate + ADP</text>
        <dbReference type="Rhea" id="RHEA:14801"/>
        <dbReference type="ChEBI" id="CHEBI:30616"/>
        <dbReference type="ChEBI" id="CHEBI:57604"/>
        <dbReference type="ChEBI" id="CHEBI:58272"/>
        <dbReference type="ChEBI" id="CHEBI:456216"/>
        <dbReference type="EC" id="2.7.2.3"/>
    </reaction>
</comment>
<comment type="pathway">
    <text evidence="1">Carbohydrate degradation; glycolysis; pyruvate from D-glyceraldehyde 3-phosphate: step 2/5.</text>
</comment>
<comment type="subunit">
    <text evidence="1">Monomer.</text>
</comment>
<comment type="subcellular location">
    <subcellularLocation>
        <location evidence="1">Cytoplasm</location>
    </subcellularLocation>
</comment>
<comment type="similarity">
    <text evidence="1">Belongs to the phosphoglycerate kinase family.</text>
</comment>